<keyword id="KW-0238">DNA-binding</keyword>
<keyword id="KW-0479">Metal-binding</keyword>
<keyword id="KW-0533">Nickel</keyword>
<keyword id="KW-0678">Repressor</keyword>
<keyword id="KW-0804">Transcription</keyword>
<keyword id="KW-0805">Transcription regulation</keyword>
<feature type="chain" id="PRO_1000125821" description="Nickel-responsive regulator">
    <location>
        <begin position="1"/>
        <end position="133"/>
    </location>
</feature>
<feature type="binding site" evidence="1">
    <location>
        <position position="76"/>
    </location>
    <ligand>
        <name>Ni(2+)</name>
        <dbReference type="ChEBI" id="CHEBI:49786"/>
    </ligand>
</feature>
<feature type="binding site" evidence="1">
    <location>
        <position position="87"/>
    </location>
    <ligand>
        <name>Ni(2+)</name>
        <dbReference type="ChEBI" id="CHEBI:49786"/>
    </ligand>
</feature>
<feature type="binding site" evidence="1">
    <location>
        <position position="89"/>
    </location>
    <ligand>
        <name>Ni(2+)</name>
        <dbReference type="ChEBI" id="CHEBI:49786"/>
    </ligand>
</feature>
<feature type="binding site" evidence="1">
    <location>
        <position position="95"/>
    </location>
    <ligand>
        <name>Ni(2+)</name>
        <dbReference type="ChEBI" id="CHEBI:49786"/>
    </ligand>
</feature>
<accession>B7NEA8</accession>
<dbReference type="EMBL" id="CU928163">
    <property type="protein sequence ID" value="CAR15108.1"/>
    <property type="molecule type" value="Genomic_DNA"/>
</dbReference>
<dbReference type="RefSeq" id="WP_001190062.1">
    <property type="nucleotide sequence ID" value="NC_011751.1"/>
</dbReference>
<dbReference type="RefSeq" id="YP_002414613.1">
    <property type="nucleotide sequence ID" value="NC_011751.1"/>
</dbReference>
<dbReference type="SMR" id="B7NEA8"/>
<dbReference type="STRING" id="585056.ECUMN_3962"/>
<dbReference type="GeneID" id="93778510"/>
<dbReference type="KEGG" id="eum:ECUMN_3962"/>
<dbReference type="PATRIC" id="fig|585056.7.peg.4136"/>
<dbReference type="HOGENOM" id="CLU_113319_1_4_6"/>
<dbReference type="Proteomes" id="UP000007097">
    <property type="component" value="Chromosome"/>
</dbReference>
<dbReference type="GO" id="GO:0003700">
    <property type="term" value="F:DNA-binding transcription factor activity"/>
    <property type="evidence" value="ECO:0007669"/>
    <property type="project" value="UniProtKB-UniRule"/>
</dbReference>
<dbReference type="GO" id="GO:0016151">
    <property type="term" value="F:nickel cation binding"/>
    <property type="evidence" value="ECO:0007669"/>
    <property type="project" value="UniProtKB-UniRule"/>
</dbReference>
<dbReference type="GO" id="GO:0043565">
    <property type="term" value="F:sequence-specific DNA binding"/>
    <property type="evidence" value="ECO:0007669"/>
    <property type="project" value="UniProtKB-ARBA"/>
</dbReference>
<dbReference type="GO" id="GO:0010045">
    <property type="term" value="P:response to nickel cation"/>
    <property type="evidence" value="ECO:0007669"/>
    <property type="project" value="InterPro"/>
</dbReference>
<dbReference type="CDD" id="cd22231">
    <property type="entry name" value="RHH_NikR_HicB-like"/>
    <property type="match status" value="1"/>
</dbReference>
<dbReference type="FunFam" id="1.10.1220.10:FF:000001">
    <property type="entry name" value="Nickel-responsive regulator"/>
    <property type="match status" value="1"/>
</dbReference>
<dbReference type="FunFam" id="3.30.70.1150:FF:000002">
    <property type="entry name" value="Nickel-responsive regulator"/>
    <property type="match status" value="1"/>
</dbReference>
<dbReference type="Gene3D" id="3.30.70.1150">
    <property type="entry name" value="ACT-like. Chain A, domain 2"/>
    <property type="match status" value="1"/>
</dbReference>
<dbReference type="Gene3D" id="1.10.1220.10">
    <property type="entry name" value="Met repressor-like"/>
    <property type="match status" value="1"/>
</dbReference>
<dbReference type="HAMAP" id="MF_00476">
    <property type="entry name" value="NikR"/>
    <property type="match status" value="1"/>
</dbReference>
<dbReference type="InterPro" id="IPR027271">
    <property type="entry name" value="Acetolactate_synth/TF_NikR_C"/>
</dbReference>
<dbReference type="InterPro" id="IPR045865">
    <property type="entry name" value="ACT-like_dom_sf"/>
</dbReference>
<dbReference type="InterPro" id="IPR013321">
    <property type="entry name" value="Arc_rbn_hlx_hlx"/>
</dbReference>
<dbReference type="InterPro" id="IPR002145">
    <property type="entry name" value="CopG"/>
</dbReference>
<dbReference type="InterPro" id="IPR050192">
    <property type="entry name" value="CopG/NikR_regulator"/>
</dbReference>
<dbReference type="InterPro" id="IPR022988">
    <property type="entry name" value="Ni_resp_reg_NikR"/>
</dbReference>
<dbReference type="InterPro" id="IPR014160">
    <property type="entry name" value="Nickel_NikR_proteobac"/>
</dbReference>
<dbReference type="InterPro" id="IPR010985">
    <property type="entry name" value="Ribbon_hlx_hlx"/>
</dbReference>
<dbReference type="InterPro" id="IPR014864">
    <property type="entry name" value="TF_NikR_Ni-bd_C"/>
</dbReference>
<dbReference type="NCBIfam" id="TIGR02793">
    <property type="entry name" value="nikR"/>
    <property type="match status" value="1"/>
</dbReference>
<dbReference type="NCBIfam" id="NF002815">
    <property type="entry name" value="PRK02967.1"/>
    <property type="match status" value="1"/>
</dbReference>
<dbReference type="NCBIfam" id="NF003381">
    <property type="entry name" value="PRK04460.1"/>
    <property type="match status" value="1"/>
</dbReference>
<dbReference type="PANTHER" id="PTHR34719">
    <property type="entry name" value="NICKEL-RESPONSIVE REGULATOR"/>
    <property type="match status" value="1"/>
</dbReference>
<dbReference type="PANTHER" id="PTHR34719:SF2">
    <property type="entry name" value="NICKEL-RESPONSIVE REGULATOR"/>
    <property type="match status" value="1"/>
</dbReference>
<dbReference type="Pfam" id="PF08753">
    <property type="entry name" value="NikR_C"/>
    <property type="match status" value="1"/>
</dbReference>
<dbReference type="Pfam" id="PF01402">
    <property type="entry name" value="RHH_1"/>
    <property type="match status" value="1"/>
</dbReference>
<dbReference type="SUPFAM" id="SSF55021">
    <property type="entry name" value="ACT-like"/>
    <property type="match status" value="1"/>
</dbReference>
<dbReference type="SUPFAM" id="SSF47598">
    <property type="entry name" value="Ribbon-helix-helix"/>
    <property type="match status" value="1"/>
</dbReference>
<proteinExistence type="inferred from homology"/>
<sequence>MQRVTITLDDDLLETLDSLSQRRGYNNRSEAIRDILRSALAQEATQQHGTQGFAVLSYVYEHEKRDLASRIVSTQHHHHDLSVATLHVHINHDDCLEIAVLKGDMGDVQHFADDVIAQRGVRHGHLQCLPKED</sequence>
<organism>
    <name type="scientific">Escherichia coli O17:K52:H18 (strain UMN026 / ExPEC)</name>
    <dbReference type="NCBI Taxonomy" id="585056"/>
    <lineage>
        <taxon>Bacteria</taxon>
        <taxon>Pseudomonadati</taxon>
        <taxon>Pseudomonadota</taxon>
        <taxon>Gammaproteobacteria</taxon>
        <taxon>Enterobacterales</taxon>
        <taxon>Enterobacteriaceae</taxon>
        <taxon>Escherichia</taxon>
    </lineage>
</organism>
<comment type="function">
    <text evidence="1">Transcriptional repressor of the nikABCDE operon. Is active in the presence of excessive concentrations of intracellular nickel.</text>
</comment>
<comment type="cofactor">
    <cofactor evidence="1">
        <name>Ni(2+)</name>
        <dbReference type="ChEBI" id="CHEBI:49786"/>
    </cofactor>
    <text evidence="1">Binds 1 nickel ion per subunit.</text>
</comment>
<comment type="subunit">
    <text evidence="1">Homotetramer.</text>
</comment>
<comment type="similarity">
    <text evidence="1">Belongs to the transcriptional regulatory CopG/NikR family.</text>
</comment>
<protein>
    <recommendedName>
        <fullName evidence="1">Nickel-responsive regulator</fullName>
    </recommendedName>
</protein>
<reference key="1">
    <citation type="journal article" date="2009" name="PLoS Genet.">
        <title>Organised genome dynamics in the Escherichia coli species results in highly diverse adaptive paths.</title>
        <authorList>
            <person name="Touchon M."/>
            <person name="Hoede C."/>
            <person name="Tenaillon O."/>
            <person name="Barbe V."/>
            <person name="Baeriswyl S."/>
            <person name="Bidet P."/>
            <person name="Bingen E."/>
            <person name="Bonacorsi S."/>
            <person name="Bouchier C."/>
            <person name="Bouvet O."/>
            <person name="Calteau A."/>
            <person name="Chiapello H."/>
            <person name="Clermont O."/>
            <person name="Cruveiller S."/>
            <person name="Danchin A."/>
            <person name="Diard M."/>
            <person name="Dossat C."/>
            <person name="Karoui M.E."/>
            <person name="Frapy E."/>
            <person name="Garry L."/>
            <person name="Ghigo J.M."/>
            <person name="Gilles A.M."/>
            <person name="Johnson J."/>
            <person name="Le Bouguenec C."/>
            <person name="Lescat M."/>
            <person name="Mangenot S."/>
            <person name="Martinez-Jehanne V."/>
            <person name="Matic I."/>
            <person name="Nassif X."/>
            <person name="Oztas S."/>
            <person name="Petit M.A."/>
            <person name="Pichon C."/>
            <person name="Rouy Z."/>
            <person name="Ruf C.S."/>
            <person name="Schneider D."/>
            <person name="Tourret J."/>
            <person name="Vacherie B."/>
            <person name="Vallenet D."/>
            <person name="Medigue C."/>
            <person name="Rocha E.P.C."/>
            <person name="Denamur E."/>
        </authorList>
    </citation>
    <scope>NUCLEOTIDE SEQUENCE [LARGE SCALE GENOMIC DNA]</scope>
    <source>
        <strain>UMN026 / ExPEC</strain>
    </source>
</reference>
<evidence type="ECO:0000255" key="1">
    <source>
        <dbReference type="HAMAP-Rule" id="MF_00476"/>
    </source>
</evidence>
<name>NIKR_ECOLU</name>
<gene>
    <name evidence="1" type="primary">nikR</name>
    <name type="ordered locus">ECUMN_3962</name>
</gene>